<organism>
    <name type="scientific">Clostridium botulinum (strain ATCC 19397 / Type A)</name>
    <dbReference type="NCBI Taxonomy" id="441770"/>
    <lineage>
        <taxon>Bacteria</taxon>
        <taxon>Bacillati</taxon>
        <taxon>Bacillota</taxon>
        <taxon>Clostridia</taxon>
        <taxon>Eubacteriales</taxon>
        <taxon>Clostridiaceae</taxon>
        <taxon>Clostridium</taxon>
    </lineage>
</organism>
<sequence>MSLQAPKGTKDLLPTESYKWQYLENKFRNIAADFGCREIRTPVFEYTELFQRGVGETTDVVQKEMYTFEDKAGRSITLKPEGTSPAVRAFVEGRLFNETQPTKMYYFTPVMRYENVQKGRLRQHHQFGIEIFGAKDASVDAEVISIPVGIYKELGVEGVELNINSIGCPKCRKTYNEALKKYLSKNYDKLCSTCKTRFDKNPLRILDCKVDTCKEIVKDAPIILDYICDECKDHFEALKSYLDVLDIKYKVDPFIVRGLDYYSKTVFEFIIDDITICAGGRYDYLIEEIGGPSMPAVGFGMGIERLLLTLQEKAIEIPEEAYVDLYLGNMGDKAKLEVLKLAKELRDRHIKCEIDHMGKSVKAQMKYANRIGAKYSMVLGEEELNTGKVSLKRMEDGQQIEVDIKEIDTLIKVFK</sequence>
<protein>
    <recommendedName>
        <fullName evidence="1">Histidine--tRNA ligase</fullName>
        <ecNumber evidence="1">6.1.1.21</ecNumber>
    </recommendedName>
    <alternativeName>
        <fullName evidence="1">Histidyl-tRNA synthetase</fullName>
        <shortName evidence="1">HisRS</shortName>
    </alternativeName>
</protein>
<comment type="catalytic activity">
    <reaction evidence="1">
        <text>tRNA(His) + L-histidine + ATP = L-histidyl-tRNA(His) + AMP + diphosphate + H(+)</text>
        <dbReference type="Rhea" id="RHEA:17313"/>
        <dbReference type="Rhea" id="RHEA-COMP:9665"/>
        <dbReference type="Rhea" id="RHEA-COMP:9689"/>
        <dbReference type="ChEBI" id="CHEBI:15378"/>
        <dbReference type="ChEBI" id="CHEBI:30616"/>
        <dbReference type="ChEBI" id="CHEBI:33019"/>
        <dbReference type="ChEBI" id="CHEBI:57595"/>
        <dbReference type="ChEBI" id="CHEBI:78442"/>
        <dbReference type="ChEBI" id="CHEBI:78527"/>
        <dbReference type="ChEBI" id="CHEBI:456215"/>
        <dbReference type="EC" id="6.1.1.21"/>
    </reaction>
</comment>
<comment type="subunit">
    <text evidence="1">Homodimer.</text>
</comment>
<comment type="subcellular location">
    <subcellularLocation>
        <location evidence="1">Cytoplasm</location>
    </subcellularLocation>
</comment>
<comment type="similarity">
    <text evidence="1">Belongs to the class-II aminoacyl-tRNA synthetase family.</text>
</comment>
<keyword id="KW-0030">Aminoacyl-tRNA synthetase</keyword>
<keyword id="KW-0067">ATP-binding</keyword>
<keyword id="KW-0963">Cytoplasm</keyword>
<keyword id="KW-0436">Ligase</keyword>
<keyword id="KW-0547">Nucleotide-binding</keyword>
<keyword id="KW-0648">Protein biosynthesis</keyword>
<feature type="chain" id="PRO_1000016342" description="Histidine--tRNA ligase">
    <location>
        <begin position="1"/>
        <end position="415"/>
    </location>
</feature>
<dbReference type="EC" id="6.1.1.21" evidence="1"/>
<dbReference type="EMBL" id="CP000726">
    <property type="protein sequence ID" value="ABS32700.1"/>
    <property type="molecule type" value="Genomic_DNA"/>
</dbReference>
<dbReference type="RefSeq" id="WP_012048076.1">
    <property type="nucleotide sequence ID" value="NC_009697.1"/>
</dbReference>
<dbReference type="SMR" id="A7FY04"/>
<dbReference type="GeneID" id="5187316"/>
<dbReference type="KEGG" id="cba:CLB_3084"/>
<dbReference type="HOGENOM" id="CLU_025113_1_1_9"/>
<dbReference type="GO" id="GO:0005737">
    <property type="term" value="C:cytoplasm"/>
    <property type="evidence" value="ECO:0007669"/>
    <property type="project" value="UniProtKB-SubCell"/>
</dbReference>
<dbReference type="GO" id="GO:0005524">
    <property type="term" value="F:ATP binding"/>
    <property type="evidence" value="ECO:0007669"/>
    <property type="project" value="UniProtKB-UniRule"/>
</dbReference>
<dbReference type="GO" id="GO:0140096">
    <property type="term" value="F:catalytic activity, acting on a protein"/>
    <property type="evidence" value="ECO:0007669"/>
    <property type="project" value="UniProtKB-ARBA"/>
</dbReference>
<dbReference type="GO" id="GO:0004821">
    <property type="term" value="F:histidine-tRNA ligase activity"/>
    <property type="evidence" value="ECO:0007669"/>
    <property type="project" value="UniProtKB-UniRule"/>
</dbReference>
<dbReference type="GO" id="GO:0016740">
    <property type="term" value="F:transferase activity"/>
    <property type="evidence" value="ECO:0007669"/>
    <property type="project" value="UniProtKB-ARBA"/>
</dbReference>
<dbReference type="GO" id="GO:0006427">
    <property type="term" value="P:histidyl-tRNA aminoacylation"/>
    <property type="evidence" value="ECO:0007669"/>
    <property type="project" value="UniProtKB-UniRule"/>
</dbReference>
<dbReference type="CDD" id="cd00773">
    <property type="entry name" value="HisRS-like_core"/>
    <property type="match status" value="1"/>
</dbReference>
<dbReference type="CDD" id="cd00859">
    <property type="entry name" value="HisRS_anticodon"/>
    <property type="match status" value="1"/>
</dbReference>
<dbReference type="FunFam" id="3.30.930.10:FF:000005">
    <property type="entry name" value="Histidine--tRNA ligase"/>
    <property type="match status" value="1"/>
</dbReference>
<dbReference type="Gene3D" id="3.40.50.800">
    <property type="entry name" value="Anticodon-binding domain"/>
    <property type="match status" value="1"/>
</dbReference>
<dbReference type="Gene3D" id="3.30.930.10">
    <property type="entry name" value="Bira Bifunctional Protein, Domain 2"/>
    <property type="match status" value="1"/>
</dbReference>
<dbReference type="HAMAP" id="MF_00127">
    <property type="entry name" value="His_tRNA_synth"/>
    <property type="match status" value="1"/>
</dbReference>
<dbReference type="InterPro" id="IPR006195">
    <property type="entry name" value="aa-tRNA-synth_II"/>
</dbReference>
<dbReference type="InterPro" id="IPR045864">
    <property type="entry name" value="aa-tRNA-synth_II/BPL/LPL"/>
</dbReference>
<dbReference type="InterPro" id="IPR004154">
    <property type="entry name" value="Anticodon-bd"/>
</dbReference>
<dbReference type="InterPro" id="IPR036621">
    <property type="entry name" value="Anticodon-bd_dom_sf"/>
</dbReference>
<dbReference type="InterPro" id="IPR015807">
    <property type="entry name" value="His-tRNA-ligase"/>
</dbReference>
<dbReference type="InterPro" id="IPR041715">
    <property type="entry name" value="HisRS-like_core"/>
</dbReference>
<dbReference type="InterPro" id="IPR004516">
    <property type="entry name" value="HisRS/HisZ"/>
</dbReference>
<dbReference type="InterPro" id="IPR033656">
    <property type="entry name" value="HisRS_anticodon"/>
</dbReference>
<dbReference type="NCBIfam" id="TIGR00442">
    <property type="entry name" value="hisS"/>
    <property type="match status" value="1"/>
</dbReference>
<dbReference type="PANTHER" id="PTHR43707:SF1">
    <property type="entry name" value="HISTIDINE--TRNA LIGASE, MITOCHONDRIAL-RELATED"/>
    <property type="match status" value="1"/>
</dbReference>
<dbReference type="PANTHER" id="PTHR43707">
    <property type="entry name" value="HISTIDYL-TRNA SYNTHETASE"/>
    <property type="match status" value="1"/>
</dbReference>
<dbReference type="Pfam" id="PF03129">
    <property type="entry name" value="HGTP_anticodon"/>
    <property type="match status" value="1"/>
</dbReference>
<dbReference type="Pfam" id="PF13393">
    <property type="entry name" value="tRNA-synt_His"/>
    <property type="match status" value="1"/>
</dbReference>
<dbReference type="PIRSF" id="PIRSF001549">
    <property type="entry name" value="His-tRNA_synth"/>
    <property type="match status" value="1"/>
</dbReference>
<dbReference type="SUPFAM" id="SSF52954">
    <property type="entry name" value="Class II aaRS ABD-related"/>
    <property type="match status" value="1"/>
</dbReference>
<dbReference type="SUPFAM" id="SSF55681">
    <property type="entry name" value="Class II aaRS and biotin synthetases"/>
    <property type="match status" value="1"/>
</dbReference>
<dbReference type="PROSITE" id="PS50862">
    <property type="entry name" value="AA_TRNA_LIGASE_II"/>
    <property type="match status" value="1"/>
</dbReference>
<accession>A7FY04</accession>
<evidence type="ECO:0000255" key="1">
    <source>
        <dbReference type="HAMAP-Rule" id="MF_00127"/>
    </source>
</evidence>
<gene>
    <name evidence="1" type="primary">hisS</name>
    <name type="ordered locus">CLB_3084</name>
</gene>
<name>SYH_CLOB1</name>
<reference key="1">
    <citation type="journal article" date="2007" name="PLoS ONE">
        <title>Analysis of the neurotoxin complex genes in Clostridium botulinum A1-A4 and B1 strains: BoNT/A3, /Ba4 and /B1 clusters are located within plasmids.</title>
        <authorList>
            <person name="Smith T.J."/>
            <person name="Hill K.K."/>
            <person name="Foley B.T."/>
            <person name="Detter J.C."/>
            <person name="Munk A.C."/>
            <person name="Bruce D.C."/>
            <person name="Doggett N.A."/>
            <person name="Smith L.A."/>
            <person name="Marks J.D."/>
            <person name="Xie G."/>
            <person name="Brettin T.S."/>
        </authorList>
    </citation>
    <scope>NUCLEOTIDE SEQUENCE [LARGE SCALE GENOMIC DNA]</scope>
    <source>
        <strain>ATCC 19397 / Type A</strain>
    </source>
</reference>
<proteinExistence type="inferred from homology"/>